<accession>P0A4P7</accession>
<accession>Q7UCM9</accession>
<accession>Q83R76</accession>
<accession>Q8FHP3</accession>
<accession>Q8GC60</accession>
<accession>Q8X9P8</accession>
<comment type="subunit">
    <text evidence="1">Homodimer.</text>
</comment>
<comment type="similarity">
    <text evidence="2">Belongs to the universal stress protein A family.</text>
</comment>
<comment type="sequence caution" evidence="2">
    <conflict type="erroneous initiation">
        <sequence resource="EMBL-CDS" id="AAG56385"/>
    </conflict>
</comment>
<comment type="sequence caution" evidence="2">
    <conflict type="erroneous initiation">
        <sequence resource="EMBL-CDS" id="BAB35420"/>
    </conflict>
</comment>
<gene>
    <name type="primary">uspF</name>
    <name type="ordered locus">Z2335</name>
    <name type="ordered locus">ECs1997</name>
</gene>
<dbReference type="EMBL" id="AE005174">
    <property type="protein sequence ID" value="AAG56385.1"/>
    <property type="status" value="ALT_INIT"/>
    <property type="molecule type" value="Genomic_DNA"/>
</dbReference>
<dbReference type="EMBL" id="BA000007">
    <property type="protein sequence ID" value="BAB35420.1"/>
    <property type="status" value="ALT_INIT"/>
    <property type="molecule type" value="Genomic_DNA"/>
</dbReference>
<dbReference type="PIR" id="E85740">
    <property type="entry name" value="E85740"/>
</dbReference>
<dbReference type="PIR" id="E90878">
    <property type="entry name" value="E90878"/>
</dbReference>
<dbReference type="RefSeq" id="NP_310024.2">
    <property type="nucleotide sequence ID" value="NC_002695.1"/>
</dbReference>
<dbReference type="RefSeq" id="WP_001295593.1">
    <property type="nucleotide sequence ID" value="NZ_VOAI01000022.1"/>
</dbReference>
<dbReference type="SMR" id="P0A4P7"/>
<dbReference type="STRING" id="155864.Z2335"/>
<dbReference type="GeneID" id="917194"/>
<dbReference type="GeneID" id="93775539"/>
<dbReference type="KEGG" id="ece:Z2335"/>
<dbReference type="KEGG" id="ecs:ECs_1997"/>
<dbReference type="PATRIC" id="fig|386585.9.peg.2098"/>
<dbReference type="eggNOG" id="COG0589">
    <property type="taxonomic scope" value="Bacteria"/>
</dbReference>
<dbReference type="HOGENOM" id="CLU_049301_12_0_6"/>
<dbReference type="OMA" id="TSHRPAM"/>
<dbReference type="Proteomes" id="UP000000558">
    <property type="component" value="Chromosome"/>
</dbReference>
<dbReference type="Proteomes" id="UP000002519">
    <property type="component" value="Chromosome"/>
</dbReference>
<dbReference type="CDD" id="cd00293">
    <property type="entry name" value="USP-like"/>
    <property type="match status" value="1"/>
</dbReference>
<dbReference type="FunFam" id="3.40.50.620:FF:000059">
    <property type="entry name" value="Universal stress protein F"/>
    <property type="match status" value="1"/>
</dbReference>
<dbReference type="Gene3D" id="3.40.50.620">
    <property type="entry name" value="HUPs"/>
    <property type="match status" value="1"/>
</dbReference>
<dbReference type="InterPro" id="IPR014729">
    <property type="entry name" value="Rossmann-like_a/b/a_fold"/>
</dbReference>
<dbReference type="InterPro" id="IPR006015">
    <property type="entry name" value="Universal_stress_UspA"/>
</dbReference>
<dbReference type="InterPro" id="IPR006016">
    <property type="entry name" value="UspA"/>
</dbReference>
<dbReference type="NCBIfam" id="NF011581">
    <property type="entry name" value="PRK15005.1"/>
    <property type="match status" value="1"/>
</dbReference>
<dbReference type="PANTHER" id="PTHR46268">
    <property type="entry name" value="STRESS RESPONSE PROTEIN NHAX"/>
    <property type="match status" value="1"/>
</dbReference>
<dbReference type="PANTHER" id="PTHR46268:SF18">
    <property type="entry name" value="UNIVERSAL STRESS PROTEIN F"/>
    <property type="match status" value="1"/>
</dbReference>
<dbReference type="Pfam" id="PF00582">
    <property type="entry name" value="Usp"/>
    <property type="match status" value="1"/>
</dbReference>
<dbReference type="PRINTS" id="PR01438">
    <property type="entry name" value="UNVRSLSTRESS"/>
</dbReference>
<dbReference type="SUPFAM" id="SSF52402">
    <property type="entry name" value="Adenine nucleotide alpha hydrolases-like"/>
    <property type="match status" value="1"/>
</dbReference>
<evidence type="ECO:0000250" key="1"/>
<evidence type="ECO:0000305" key="2"/>
<reference key="1">
    <citation type="journal article" date="2001" name="Nature">
        <title>Genome sequence of enterohaemorrhagic Escherichia coli O157:H7.</title>
        <authorList>
            <person name="Perna N.T."/>
            <person name="Plunkett G. III"/>
            <person name="Burland V."/>
            <person name="Mau B."/>
            <person name="Glasner J.D."/>
            <person name="Rose D.J."/>
            <person name="Mayhew G.F."/>
            <person name="Evans P.S."/>
            <person name="Gregor J."/>
            <person name="Kirkpatrick H.A."/>
            <person name="Posfai G."/>
            <person name="Hackett J."/>
            <person name="Klink S."/>
            <person name="Boutin A."/>
            <person name="Shao Y."/>
            <person name="Miller L."/>
            <person name="Grotbeck E.J."/>
            <person name="Davis N.W."/>
            <person name="Lim A."/>
            <person name="Dimalanta E.T."/>
            <person name="Potamousis K."/>
            <person name="Apodaca J."/>
            <person name="Anantharaman T.S."/>
            <person name="Lin J."/>
            <person name="Yen G."/>
            <person name="Schwartz D.C."/>
            <person name="Welch R.A."/>
            <person name="Blattner F.R."/>
        </authorList>
    </citation>
    <scope>NUCLEOTIDE SEQUENCE [LARGE SCALE GENOMIC DNA]</scope>
    <source>
        <strain>O157:H7 / EDL933 / ATCC 700927 / EHEC</strain>
    </source>
</reference>
<reference key="2">
    <citation type="journal article" date="2001" name="DNA Res.">
        <title>Complete genome sequence of enterohemorrhagic Escherichia coli O157:H7 and genomic comparison with a laboratory strain K-12.</title>
        <authorList>
            <person name="Hayashi T."/>
            <person name="Makino K."/>
            <person name="Ohnishi M."/>
            <person name="Kurokawa K."/>
            <person name="Ishii K."/>
            <person name="Yokoyama K."/>
            <person name="Han C.-G."/>
            <person name="Ohtsubo E."/>
            <person name="Nakayama K."/>
            <person name="Murata T."/>
            <person name="Tanaka M."/>
            <person name="Tobe T."/>
            <person name="Iida T."/>
            <person name="Takami H."/>
            <person name="Honda T."/>
            <person name="Sasakawa C."/>
            <person name="Ogasawara N."/>
            <person name="Yasunaga T."/>
            <person name="Kuhara S."/>
            <person name="Shiba T."/>
            <person name="Hattori M."/>
            <person name="Shinagawa H."/>
        </authorList>
    </citation>
    <scope>NUCLEOTIDE SEQUENCE [LARGE SCALE GENOMIC DNA]</scope>
    <source>
        <strain>O157:H7 / Sakai / RIMD 0509952 / EHEC</strain>
    </source>
</reference>
<proteinExistence type="inferred from homology"/>
<keyword id="KW-1185">Reference proteome</keyword>
<name>USPF_ECO57</name>
<sequence length="144" mass="15958">MNRTILVPIDISDSELTQRVISHVEAEAKIDDAEVHFLTVIPSLPYYASLGLAYSAELPAMDDLKAEAKSQLEEIIKKFKLPTDRVHVHVEEGSPKDRILELAKKIPAHMIIIASHRPDITTYLLGSNAAAVVRHAECSVLVVR</sequence>
<protein>
    <recommendedName>
        <fullName>Universal stress protein F</fullName>
    </recommendedName>
</protein>
<feature type="chain" id="PRO_0000147428" description="Universal stress protein F">
    <location>
        <begin position="1"/>
        <end position="144"/>
    </location>
</feature>
<organism>
    <name type="scientific">Escherichia coli O157:H7</name>
    <dbReference type="NCBI Taxonomy" id="83334"/>
    <lineage>
        <taxon>Bacteria</taxon>
        <taxon>Pseudomonadati</taxon>
        <taxon>Pseudomonadota</taxon>
        <taxon>Gammaproteobacteria</taxon>
        <taxon>Enterobacterales</taxon>
        <taxon>Enterobacteriaceae</taxon>
        <taxon>Escherichia</taxon>
    </lineage>
</organism>